<keyword id="KW-1185">Reference proteome</keyword>
<keyword id="KW-0687">Ribonucleoprotein</keyword>
<keyword id="KW-0689">Ribosomal protein</keyword>
<reference key="1">
    <citation type="journal article" date="2000" name="Nucleic Acids Res.">
        <title>Complete genome sequence of the alkaliphilic bacterium Bacillus halodurans and genomic sequence comparison with Bacillus subtilis.</title>
        <authorList>
            <person name="Takami H."/>
            <person name="Nakasone K."/>
            <person name="Takaki Y."/>
            <person name="Maeno G."/>
            <person name="Sasaki R."/>
            <person name="Masui N."/>
            <person name="Fuji F."/>
            <person name="Hirama C."/>
            <person name="Nakamura Y."/>
            <person name="Ogasawara N."/>
            <person name="Kuhara S."/>
            <person name="Horikoshi K."/>
        </authorList>
    </citation>
    <scope>NUCLEOTIDE SEQUENCE [LARGE SCALE GENOMIC DNA]</scope>
    <source>
        <strain>ATCC BAA-125 / DSM 18197 / FERM 7344 / JCM 9153 / C-125</strain>
    </source>
</reference>
<organism>
    <name type="scientific">Halalkalibacterium halodurans (strain ATCC BAA-125 / DSM 18197 / FERM 7344 / JCM 9153 / C-125)</name>
    <name type="common">Bacillus halodurans</name>
    <dbReference type="NCBI Taxonomy" id="272558"/>
    <lineage>
        <taxon>Bacteria</taxon>
        <taxon>Bacillati</taxon>
        <taxon>Bacillota</taxon>
        <taxon>Bacilli</taxon>
        <taxon>Bacillales</taxon>
        <taxon>Bacillaceae</taxon>
        <taxon>Halalkalibacterium (ex Joshi et al. 2022)</taxon>
    </lineage>
</organism>
<comment type="PTM">
    <text evidence="1">The N-terminus is cleaved by ribosomal processing cysteine protease Prp.</text>
</comment>
<comment type="similarity">
    <text evidence="2">Belongs to the bacterial ribosomal protein bL27 family.</text>
</comment>
<sequence length="94" mass="10228">MLKMNLQFFASKKGVGSTKNGRDSISKRLGTKRADGQLVTGGSILVRQRGTRIYPGVNVGKGGDDTLFAKVDGVVKFERVGRDRKQVSVYPKAQ</sequence>
<protein>
    <recommendedName>
        <fullName evidence="2">Large ribosomal subunit protein bL27</fullName>
    </recommendedName>
    <alternativeName>
        <fullName evidence="3">50S ribosomal protein L27</fullName>
    </alternativeName>
</protein>
<dbReference type="EMBL" id="BA000004">
    <property type="protein sequence ID" value="BAB06728.1"/>
    <property type="molecule type" value="Genomic_DNA"/>
</dbReference>
<dbReference type="PIR" id="A84026">
    <property type="entry name" value="A84026"/>
</dbReference>
<dbReference type="RefSeq" id="WP_010899153.1">
    <property type="nucleotide sequence ID" value="NC_002570.2"/>
</dbReference>
<dbReference type="SMR" id="Q9K8J7"/>
<dbReference type="STRING" id="272558.gene:10728919"/>
<dbReference type="GeneID" id="87598531"/>
<dbReference type="KEGG" id="bha:BH3009"/>
<dbReference type="eggNOG" id="COG0211">
    <property type="taxonomic scope" value="Bacteria"/>
</dbReference>
<dbReference type="HOGENOM" id="CLU_095424_4_0_9"/>
<dbReference type="OrthoDB" id="9803474at2"/>
<dbReference type="Proteomes" id="UP000001258">
    <property type="component" value="Chromosome"/>
</dbReference>
<dbReference type="GO" id="GO:0022625">
    <property type="term" value="C:cytosolic large ribosomal subunit"/>
    <property type="evidence" value="ECO:0007669"/>
    <property type="project" value="TreeGrafter"/>
</dbReference>
<dbReference type="GO" id="GO:0003735">
    <property type="term" value="F:structural constituent of ribosome"/>
    <property type="evidence" value="ECO:0007669"/>
    <property type="project" value="InterPro"/>
</dbReference>
<dbReference type="GO" id="GO:0006412">
    <property type="term" value="P:translation"/>
    <property type="evidence" value="ECO:0007669"/>
    <property type="project" value="UniProtKB-UniRule"/>
</dbReference>
<dbReference type="FunFam" id="2.40.50.100:FF:000004">
    <property type="entry name" value="50S ribosomal protein L27"/>
    <property type="match status" value="1"/>
</dbReference>
<dbReference type="Gene3D" id="2.40.50.100">
    <property type="match status" value="1"/>
</dbReference>
<dbReference type="HAMAP" id="MF_00539">
    <property type="entry name" value="Ribosomal_bL27"/>
    <property type="match status" value="1"/>
</dbReference>
<dbReference type="InterPro" id="IPR001684">
    <property type="entry name" value="Ribosomal_bL27"/>
</dbReference>
<dbReference type="InterPro" id="IPR018261">
    <property type="entry name" value="Ribosomal_bL27_CS"/>
</dbReference>
<dbReference type="NCBIfam" id="TIGR00062">
    <property type="entry name" value="L27"/>
    <property type="match status" value="1"/>
</dbReference>
<dbReference type="PANTHER" id="PTHR15893:SF0">
    <property type="entry name" value="LARGE RIBOSOMAL SUBUNIT PROTEIN BL27M"/>
    <property type="match status" value="1"/>
</dbReference>
<dbReference type="PANTHER" id="PTHR15893">
    <property type="entry name" value="RIBOSOMAL PROTEIN L27"/>
    <property type="match status" value="1"/>
</dbReference>
<dbReference type="Pfam" id="PF01016">
    <property type="entry name" value="Ribosomal_L27"/>
    <property type="match status" value="1"/>
</dbReference>
<dbReference type="PRINTS" id="PR00063">
    <property type="entry name" value="RIBOSOMALL27"/>
</dbReference>
<dbReference type="SUPFAM" id="SSF110324">
    <property type="entry name" value="Ribosomal L27 protein-like"/>
    <property type="match status" value="1"/>
</dbReference>
<dbReference type="PROSITE" id="PS00831">
    <property type="entry name" value="RIBOSOMAL_L27"/>
    <property type="match status" value="1"/>
</dbReference>
<accession>Q9K8J7</accession>
<feature type="propeptide" id="PRO_0000459861" evidence="1">
    <location>
        <begin position="1"/>
        <end position="9"/>
    </location>
</feature>
<feature type="chain" id="PRO_0000181039" description="Large ribosomal subunit protein bL27">
    <location>
        <begin position="10"/>
        <end position="94"/>
    </location>
</feature>
<name>RL27_HALH5</name>
<proteinExistence type="inferred from homology"/>
<gene>
    <name evidence="2" type="primary">rpmA</name>
    <name type="ordered locus">BH3009</name>
</gene>
<evidence type="ECO:0000250" key="1">
    <source>
        <dbReference type="UniProtKB" id="Q2FXT0"/>
    </source>
</evidence>
<evidence type="ECO:0000255" key="2">
    <source>
        <dbReference type="HAMAP-Rule" id="MF_00539"/>
    </source>
</evidence>
<evidence type="ECO:0000305" key="3"/>